<proteinExistence type="inferred from homology"/>
<protein>
    <recommendedName>
        <fullName evidence="1">2-C-methyl-D-erythritol 4-phosphate cytidylyltransferase</fullName>
        <ecNumber evidence="1">2.7.7.60</ecNumber>
    </recommendedName>
    <alternativeName>
        <fullName evidence="1">4-diphosphocytidyl-2C-methyl-D-erythritol synthase</fullName>
    </alternativeName>
    <alternativeName>
        <fullName evidence="1">MEP cytidylyltransferase</fullName>
        <shortName evidence="1">MCT</shortName>
    </alternativeName>
</protein>
<comment type="function">
    <text evidence="1">Catalyzes the formation of 4-diphosphocytidyl-2-C-methyl-D-erythritol from CTP and 2-C-methyl-D-erythritol 4-phosphate (MEP).</text>
</comment>
<comment type="catalytic activity">
    <reaction evidence="1">
        <text>2-C-methyl-D-erythritol 4-phosphate + CTP + H(+) = 4-CDP-2-C-methyl-D-erythritol + diphosphate</text>
        <dbReference type="Rhea" id="RHEA:13429"/>
        <dbReference type="ChEBI" id="CHEBI:15378"/>
        <dbReference type="ChEBI" id="CHEBI:33019"/>
        <dbReference type="ChEBI" id="CHEBI:37563"/>
        <dbReference type="ChEBI" id="CHEBI:57823"/>
        <dbReference type="ChEBI" id="CHEBI:58262"/>
        <dbReference type="EC" id="2.7.7.60"/>
    </reaction>
</comment>
<comment type="pathway">
    <text evidence="1">Isoprenoid biosynthesis; isopentenyl diphosphate biosynthesis via DXP pathway; isopentenyl diphosphate from 1-deoxy-D-xylulose 5-phosphate: step 2/6.</text>
</comment>
<comment type="similarity">
    <text evidence="1">Belongs to the IspD/TarI cytidylyltransferase family. IspD subfamily.</text>
</comment>
<organism>
    <name type="scientific">Acaryochloris marina (strain MBIC 11017)</name>
    <dbReference type="NCBI Taxonomy" id="329726"/>
    <lineage>
        <taxon>Bacteria</taxon>
        <taxon>Bacillati</taxon>
        <taxon>Cyanobacteriota</taxon>
        <taxon>Cyanophyceae</taxon>
        <taxon>Acaryochloridales</taxon>
        <taxon>Acaryochloridaceae</taxon>
        <taxon>Acaryochloris</taxon>
    </lineage>
</organism>
<gene>
    <name evidence="1" type="primary">ispD</name>
    <name type="ordered locus">AM1_3984</name>
</gene>
<name>ISPD_ACAM1</name>
<accession>B0C9F6</accession>
<dbReference type="EC" id="2.7.7.60" evidence="1"/>
<dbReference type="EMBL" id="CP000828">
    <property type="protein sequence ID" value="ABW28969.1"/>
    <property type="molecule type" value="Genomic_DNA"/>
</dbReference>
<dbReference type="RefSeq" id="WP_012164325.1">
    <property type="nucleotide sequence ID" value="NC_009925.1"/>
</dbReference>
<dbReference type="SMR" id="B0C9F6"/>
<dbReference type="STRING" id="329726.AM1_3984"/>
<dbReference type="KEGG" id="amr:AM1_3984"/>
<dbReference type="eggNOG" id="COG1211">
    <property type="taxonomic scope" value="Bacteria"/>
</dbReference>
<dbReference type="HOGENOM" id="CLU_061281_1_0_3"/>
<dbReference type="OrthoDB" id="9806837at2"/>
<dbReference type="UniPathway" id="UPA00056">
    <property type="reaction ID" value="UER00093"/>
</dbReference>
<dbReference type="Proteomes" id="UP000000268">
    <property type="component" value="Chromosome"/>
</dbReference>
<dbReference type="GO" id="GO:0050518">
    <property type="term" value="F:2-C-methyl-D-erythritol 4-phosphate cytidylyltransferase activity"/>
    <property type="evidence" value="ECO:0007669"/>
    <property type="project" value="UniProtKB-UniRule"/>
</dbReference>
<dbReference type="GO" id="GO:0019288">
    <property type="term" value="P:isopentenyl diphosphate biosynthetic process, methylerythritol 4-phosphate pathway"/>
    <property type="evidence" value="ECO:0007669"/>
    <property type="project" value="UniProtKB-UniRule"/>
</dbReference>
<dbReference type="CDD" id="cd02516">
    <property type="entry name" value="CDP-ME_synthetase"/>
    <property type="match status" value="1"/>
</dbReference>
<dbReference type="FunFam" id="3.90.550.10:FF:000003">
    <property type="entry name" value="2-C-methyl-D-erythritol 4-phosphate cytidylyltransferase"/>
    <property type="match status" value="1"/>
</dbReference>
<dbReference type="Gene3D" id="3.90.550.10">
    <property type="entry name" value="Spore Coat Polysaccharide Biosynthesis Protein SpsA, Chain A"/>
    <property type="match status" value="1"/>
</dbReference>
<dbReference type="HAMAP" id="MF_00108">
    <property type="entry name" value="IspD"/>
    <property type="match status" value="1"/>
</dbReference>
<dbReference type="InterPro" id="IPR001228">
    <property type="entry name" value="IspD"/>
</dbReference>
<dbReference type="InterPro" id="IPR034683">
    <property type="entry name" value="IspD/TarI"/>
</dbReference>
<dbReference type="InterPro" id="IPR050088">
    <property type="entry name" value="IspD/TarI_cytidylyltransf_bact"/>
</dbReference>
<dbReference type="InterPro" id="IPR018294">
    <property type="entry name" value="ISPD_synthase_CS"/>
</dbReference>
<dbReference type="InterPro" id="IPR029044">
    <property type="entry name" value="Nucleotide-diphossugar_trans"/>
</dbReference>
<dbReference type="NCBIfam" id="TIGR00453">
    <property type="entry name" value="ispD"/>
    <property type="match status" value="1"/>
</dbReference>
<dbReference type="PANTHER" id="PTHR32125">
    <property type="entry name" value="2-C-METHYL-D-ERYTHRITOL 4-PHOSPHATE CYTIDYLYLTRANSFERASE, CHLOROPLASTIC"/>
    <property type="match status" value="1"/>
</dbReference>
<dbReference type="PANTHER" id="PTHR32125:SF4">
    <property type="entry name" value="2-C-METHYL-D-ERYTHRITOL 4-PHOSPHATE CYTIDYLYLTRANSFERASE, CHLOROPLASTIC"/>
    <property type="match status" value="1"/>
</dbReference>
<dbReference type="Pfam" id="PF01128">
    <property type="entry name" value="IspD"/>
    <property type="match status" value="1"/>
</dbReference>
<dbReference type="SUPFAM" id="SSF53448">
    <property type="entry name" value="Nucleotide-diphospho-sugar transferases"/>
    <property type="match status" value="1"/>
</dbReference>
<dbReference type="PROSITE" id="PS01295">
    <property type="entry name" value="ISPD"/>
    <property type="match status" value="1"/>
</dbReference>
<reference key="1">
    <citation type="journal article" date="2008" name="Proc. Natl. Acad. Sci. U.S.A.">
        <title>Niche adaptation and genome expansion in the chlorophyll d-producing cyanobacterium Acaryochloris marina.</title>
        <authorList>
            <person name="Swingley W.D."/>
            <person name="Chen M."/>
            <person name="Cheung P.C."/>
            <person name="Conrad A.L."/>
            <person name="Dejesa L.C."/>
            <person name="Hao J."/>
            <person name="Honchak B.M."/>
            <person name="Karbach L.E."/>
            <person name="Kurdoglu A."/>
            <person name="Lahiri S."/>
            <person name="Mastrian S.D."/>
            <person name="Miyashita H."/>
            <person name="Page L."/>
            <person name="Ramakrishna P."/>
            <person name="Satoh S."/>
            <person name="Sattley W.M."/>
            <person name="Shimada Y."/>
            <person name="Taylor H.L."/>
            <person name="Tomo T."/>
            <person name="Tsuchiya T."/>
            <person name="Wang Z.T."/>
            <person name="Raymond J."/>
            <person name="Mimuro M."/>
            <person name="Blankenship R.E."/>
            <person name="Touchman J.W."/>
        </authorList>
    </citation>
    <scope>NUCLEOTIDE SEQUENCE [LARGE SCALE GENOMIC DNA]</scope>
    <source>
        <strain>MBIC 11017</strain>
    </source>
</reference>
<sequence length="237" mass="26117">MHLLIPAAGMGRRMGSDRNKLRLMLHGKPLLAWTLLAAESSISISWIGIIGQLEDEPTWETLLNTLSLNKPVVFIEGGQTRQESVYNGLQALPPEAEQVLIHDGARCLATPELLDRCAHALHKYQGFVAAVPVKDTIKVVDTTHQIQGTPDRSQLWAAQTPQGFQVVPLKKCHEQGRQQGWEVTDDAALFEKLDLPVHIVVGEETNLKVTTPADLAIAELILEQRLQKNSQTDGFGS</sequence>
<keyword id="KW-0414">Isoprene biosynthesis</keyword>
<keyword id="KW-0548">Nucleotidyltransferase</keyword>
<keyword id="KW-1185">Reference proteome</keyword>
<keyword id="KW-0808">Transferase</keyword>
<evidence type="ECO:0000255" key="1">
    <source>
        <dbReference type="HAMAP-Rule" id="MF_00108"/>
    </source>
</evidence>
<feature type="chain" id="PRO_1000075925" description="2-C-methyl-D-erythritol 4-phosphate cytidylyltransferase">
    <location>
        <begin position="1"/>
        <end position="237"/>
    </location>
</feature>
<feature type="site" description="Transition state stabilizer" evidence="1">
    <location>
        <position position="13"/>
    </location>
</feature>
<feature type="site" description="Transition state stabilizer" evidence="1">
    <location>
        <position position="20"/>
    </location>
</feature>
<feature type="site" description="Positions MEP for the nucleophilic attack" evidence="1">
    <location>
        <position position="152"/>
    </location>
</feature>
<feature type="site" description="Positions MEP for the nucleophilic attack" evidence="1">
    <location>
        <position position="208"/>
    </location>
</feature>